<feature type="chain" id="PRO_0000122320" description="Probable histidinol-phosphatase">
    <location>
        <begin position="1"/>
        <end position="233"/>
    </location>
</feature>
<accession>Q9WZR1</accession>
<organism>
    <name type="scientific">Thermotoga maritima (strain ATCC 43589 / DSM 3109 / JCM 10099 / NBRC 100826 / MSB8)</name>
    <dbReference type="NCBI Taxonomy" id="243274"/>
    <lineage>
        <taxon>Bacteria</taxon>
        <taxon>Thermotogati</taxon>
        <taxon>Thermotogota</taxon>
        <taxon>Thermotogae</taxon>
        <taxon>Thermotogales</taxon>
        <taxon>Thermotogaceae</taxon>
        <taxon>Thermotoga</taxon>
    </lineage>
</organism>
<proteinExistence type="inferred from homology"/>
<sequence>MIDMHLHSTFSYDGKAEIDDIISQVQKLGIEHFCITDHYEYENGELVHDFNVEEYFLTMEKYDLPKGAEISWDGVGEAVFPDGFDYLLLGIHRYDENLPPDELARDYLERTLFVMERVKFHTLAHLDYPARYAKADFKANRDLIEKILVFLVKNEKALEINTAGLFKHGKPNPDYWIVEMYYDLGGRVVTIGSDAHESQHIGRGIEEVMRELKKFNFEYLAVDGKKLVTVKLR</sequence>
<name>HIS9_THEMA</name>
<protein>
    <recommendedName>
        <fullName>Probable histidinol-phosphatase</fullName>
        <shortName>HolPase</shortName>
        <ecNumber>3.1.3.15</ecNumber>
    </recommendedName>
</protein>
<keyword id="KW-0028">Amino-acid biosynthesis</keyword>
<keyword id="KW-0368">Histidine biosynthesis</keyword>
<keyword id="KW-0378">Hydrolase</keyword>
<keyword id="KW-1185">Reference proteome</keyword>
<reference key="1">
    <citation type="journal article" date="1999" name="Nature">
        <title>Evidence for lateral gene transfer between Archaea and Bacteria from genome sequence of Thermotoga maritima.</title>
        <authorList>
            <person name="Nelson K.E."/>
            <person name="Clayton R.A."/>
            <person name="Gill S.R."/>
            <person name="Gwinn M.L."/>
            <person name="Dodson R.J."/>
            <person name="Haft D.H."/>
            <person name="Hickey E.K."/>
            <person name="Peterson J.D."/>
            <person name="Nelson W.C."/>
            <person name="Ketchum K.A."/>
            <person name="McDonald L.A."/>
            <person name="Utterback T.R."/>
            <person name="Malek J.A."/>
            <person name="Linher K.D."/>
            <person name="Garrett M.M."/>
            <person name="Stewart A.M."/>
            <person name="Cotton M.D."/>
            <person name="Pratt M.S."/>
            <person name="Phillips C.A."/>
            <person name="Richardson D.L."/>
            <person name="Heidelberg J.F."/>
            <person name="Sutton G.G."/>
            <person name="Fleischmann R.D."/>
            <person name="Eisen J.A."/>
            <person name="White O."/>
            <person name="Salzberg S.L."/>
            <person name="Smith H.O."/>
            <person name="Venter J.C."/>
            <person name="Fraser C.M."/>
        </authorList>
    </citation>
    <scope>NUCLEOTIDE SEQUENCE [LARGE SCALE GENOMIC DNA]</scope>
    <source>
        <strain>ATCC 43589 / DSM 3109 / JCM 10099 / NBRC 100826 / MSB8</strain>
    </source>
</reference>
<gene>
    <name type="primary">hisK</name>
    <name type="ordered locus">TM_0804</name>
</gene>
<dbReference type="EC" id="3.1.3.15"/>
<dbReference type="EMBL" id="AE000512">
    <property type="protein sequence ID" value="AAD35886.1"/>
    <property type="molecule type" value="Genomic_DNA"/>
</dbReference>
<dbReference type="PIR" id="E72330">
    <property type="entry name" value="E72330"/>
</dbReference>
<dbReference type="RefSeq" id="NP_228613.1">
    <property type="nucleotide sequence ID" value="NC_000853.1"/>
</dbReference>
<dbReference type="RefSeq" id="WP_004080859.1">
    <property type="nucleotide sequence ID" value="NZ_CP011107.1"/>
</dbReference>
<dbReference type="SMR" id="Q9WZR1"/>
<dbReference type="STRING" id="243274.TM_0804"/>
<dbReference type="PaxDb" id="243274-THEMA_00630"/>
<dbReference type="EnsemblBacteria" id="AAD35886">
    <property type="protein sequence ID" value="AAD35886"/>
    <property type="gene ID" value="TM_0804"/>
</dbReference>
<dbReference type="KEGG" id="tma:TM0804"/>
<dbReference type="KEGG" id="tmi:THEMA_00630"/>
<dbReference type="KEGG" id="tmm:Tmari_0805"/>
<dbReference type="KEGG" id="tmw:THMA_0823"/>
<dbReference type="eggNOG" id="COG1387">
    <property type="taxonomic scope" value="Bacteria"/>
</dbReference>
<dbReference type="InParanoid" id="Q9WZR1"/>
<dbReference type="OrthoDB" id="9775255at2"/>
<dbReference type="UniPathway" id="UPA00031">
    <property type="reaction ID" value="UER00013"/>
</dbReference>
<dbReference type="Proteomes" id="UP000008183">
    <property type="component" value="Chromosome"/>
</dbReference>
<dbReference type="GO" id="GO:0004401">
    <property type="term" value="F:histidinol-phosphatase activity"/>
    <property type="evidence" value="ECO:0000318"/>
    <property type="project" value="GO_Central"/>
</dbReference>
<dbReference type="GO" id="GO:0000105">
    <property type="term" value="P:L-histidine biosynthetic process"/>
    <property type="evidence" value="ECO:0000318"/>
    <property type="project" value="GO_Central"/>
</dbReference>
<dbReference type="Gene3D" id="3.20.20.140">
    <property type="entry name" value="Metal-dependent hydrolases"/>
    <property type="match status" value="1"/>
</dbReference>
<dbReference type="InterPro" id="IPR010140">
    <property type="entry name" value="Histidinol_P_phosphatase_HisJ"/>
</dbReference>
<dbReference type="InterPro" id="IPR004013">
    <property type="entry name" value="PHP_dom"/>
</dbReference>
<dbReference type="InterPro" id="IPR003141">
    <property type="entry name" value="Pol/His_phosphatase_N"/>
</dbReference>
<dbReference type="InterPro" id="IPR016195">
    <property type="entry name" value="Pol/histidinol_Pase-like"/>
</dbReference>
<dbReference type="PANTHER" id="PTHR21039">
    <property type="entry name" value="HISTIDINOL PHOSPHATASE-RELATED"/>
    <property type="match status" value="1"/>
</dbReference>
<dbReference type="PANTHER" id="PTHR21039:SF0">
    <property type="entry name" value="HISTIDINOL-PHOSPHATASE"/>
    <property type="match status" value="1"/>
</dbReference>
<dbReference type="Pfam" id="PF02811">
    <property type="entry name" value="PHP"/>
    <property type="match status" value="1"/>
</dbReference>
<dbReference type="SMART" id="SM00481">
    <property type="entry name" value="POLIIIAc"/>
    <property type="match status" value="1"/>
</dbReference>
<dbReference type="SUPFAM" id="SSF89550">
    <property type="entry name" value="PHP domain-like"/>
    <property type="match status" value="1"/>
</dbReference>
<evidence type="ECO:0000305" key="1"/>
<comment type="catalytic activity">
    <reaction>
        <text>L-histidinol phosphate + H2O = L-histidinol + phosphate</text>
        <dbReference type="Rhea" id="RHEA:14465"/>
        <dbReference type="ChEBI" id="CHEBI:15377"/>
        <dbReference type="ChEBI" id="CHEBI:43474"/>
        <dbReference type="ChEBI" id="CHEBI:57699"/>
        <dbReference type="ChEBI" id="CHEBI:57980"/>
        <dbReference type="EC" id="3.1.3.15"/>
    </reaction>
</comment>
<comment type="pathway">
    <text>Amino-acid biosynthesis; L-histidine biosynthesis; L-histidine from 5-phospho-alpha-D-ribose 1-diphosphate: step 8/9.</text>
</comment>
<comment type="similarity">
    <text evidence="1">Belongs to the PHP hydrolase family. HisK subfamily.</text>
</comment>